<gene>
    <name evidence="7" type="primary">Mapk14</name>
    <name type="synonym">Csbp1</name>
    <name type="synonym">Csbp2</name>
</gene>
<evidence type="ECO:0000250" key="1"/>
<evidence type="ECO:0000250" key="2">
    <source>
        <dbReference type="UniProtKB" id="P47811"/>
    </source>
</evidence>
<evidence type="ECO:0000250" key="3">
    <source>
        <dbReference type="UniProtKB" id="Q16539"/>
    </source>
</evidence>
<evidence type="ECO:0000255" key="4">
    <source>
        <dbReference type="PROSITE-ProRule" id="PRU00159"/>
    </source>
</evidence>
<evidence type="ECO:0000303" key="5">
    <source ref="3"/>
</evidence>
<evidence type="ECO:0000305" key="6"/>
<evidence type="ECO:0000312" key="7">
    <source>
        <dbReference type="RGD" id="70496"/>
    </source>
</evidence>
<evidence type="ECO:0007744" key="8">
    <source>
    </source>
</evidence>
<protein>
    <recommendedName>
        <fullName evidence="6">Mitogen-activated protein kinase 14</fullName>
        <shortName>MAP kinase 14</shortName>
        <shortName>MAPK 14</shortName>
        <ecNumber>2.7.11.24</ecNumber>
    </recommendedName>
    <alternativeName>
        <fullName>CRK1</fullName>
    </alternativeName>
    <alternativeName>
        <fullName>Mitogen-activated protein kinase p38 alpha</fullName>
        <shortName>MAP kinase p38 alpha</shortName>
    </alternativeName>
</protein>
<accession>P70618</accession>
<accession>O08594</accession>
<accession>Q99MG4</accession>
<comment type="function">
    <text evidence="3">Serine/threonine kinase which acts as an essential component of the MAP kinase signal transduction pathway. MAPK14 is one of the four p38 MAPKs which play an important role in the cascades of cellular responses evoked by extracellular stimuli such as pro-inflammatory cytokines or physical stress leading to direct activation of transcription factors. Accordingly, p38 MAPKs phosphorylate a broad range of proteins and it has been estimated that they may have approximately 200 to 300 substrates each. Some of the targets are downstream kinases which are activated through phosphorylation and further phosphorylate additional targets. RPS6KA5/MSK1 and RPS6KA4/MSK2 can directly phosphorylate and activate transcription factors such as CREB1, ATF1, the NF-kappa-B isoform RELA/NFKB3, STAT1 and STAT3, but can also phosphorylate histone H3 and the nucleosomal protein HMGN1. RPS6KA5/MSK1 and RPS6KA4/MSK2 play important roles in the rapid induction of immediate-early genes in response to stress or mitogenic stimuli, either by inducing chromatin remodeling or by recruiting the transcription machinery. On the other hand, two other kinase targets, MAPKAPK2/MK2 and MAPKAPK3/MK3, participate in the control of gene expression mostly at the post-transcriptional level, by phosphorylating ZFP36 (tristetraprolin) and ELAVL1, and by regulating EEF2K, which is important for the elongation of mRNA during translation. MKNK1/MNK1 and MKNK2/MNK2, two other kinases activated by p38 MAPKs, regulate protein synthesis by phosphorylating the initiation factor EIF4E2. MAPK14 also interacts with casein kinase II, leading to its activation through autophosphorylation and further phosphorylation of TP53/p53. In the cytoplasm, the p38 MAPK pathway is an important regulator of protein turnover. For example, CFLAR is an inhibitor of TNF-induced apoptosis whose proteasome-mediated degradation is regulated by p38 MAPK phosphorylation. In a similar way, MAPK14 phosphorylates the ubiquitin ligase SIAH2, regulating its activity towards EGLN3. MAPK14 may also inhibit the lysosomal degradation pathway of autophagy by interfering with the intracellular trafficking of the transmembrane protein ATG9. Another function of MAPK14 is to regulate the endocytosis of membrane receptors by different mechanisms that impinge on the small GTPase RAB5A. In addition, clathrin-mediated EGFR internalization induced by inflammatory cytokines and UV irradiation depends on MAPK14-mediated phosphorylation of EGFR itself as well as of RAB5A effectors. Ectodomain shedding of transmembrane proteins is regulated by p38 MAPKs as well. In response to inflammatory stimuli, p38 MAPKs phosphorylate the membrane-associated metalloprotease ADAM17. Such phosphorylation is required for ADAM17-mediated ectodomain shedding of TGF-alpha family ligands, which results in the activation of EGFR signaling and cell proliferation. Another p38 MAPK substrate is FGFR1. FGFR1 can be translocated from the extracellular space into the cytosol and nucleus of target cells, and regulates processes such as rRNA synthesis and cell growth. FGFR1 translocation requires p38 MAPK activation. In the nucleus, many transcription factors are phosphorylated and activated by p38 MAPKs in response to different stimuli. Classical examples include ATF1, ATF2, ATF6, ELK1, PTPRH, DDIT3, TP53/p53 and MEF2C and MEF2A. The p38 MAPKs are emerging as important modulators of gene expression by regulating chromatin modifiers and remodelers. The promoters of several genes involved in the inflammatory response, such as IL6, IL8 and IL12B, display a p38 MAPK-dependent enrichment of histone H3 phosphorylation on 'Ser-10' (H3S10ph) in LPS-stimulated myeloid cells. This phosphorylation enhances the accessibility of the cryptic NF-kappa-B-binding sites marking promoters for increased NF-kappa-B recruitment. Phosphorylates CDC25B and CDC25C which is required for binding to 14-3-3 proteins and leads to initiation of a G2 delay after ultraviolet radiation. Phosphorylates TIAR following DNA damage, releasing TIAR from GADD45A mRNA and preventing mRNA degradation. The p38 MAPKs may also have kinase-independent roles, which are thought to be due to the binding to targets in the absence of phosphorylation. Protein O-Glc-N-acylation catalyzed by the OGT is regulated by MAPK14, and, although OGT does not seem to be phosphorylated by MAPK14, their interaction increases upon MAPK14 activation induced by glucose deprivation. This interaction may regulate OGT activity by recruiting it to specific targets such as neurofilament H, stimulating its O-Glc-N-acylation. Required in mid-fetal development for the growth of embryo-derived blood vessels in the labyrinth layer of the placenta. Also plays an essential role in developmental and stress-induced erythropoiesis, through regulation of EPO gene expression. Phosphorylates S100A9 at 'Thr-113' (By similarity).</text>
</comment>
<comment type="catalytic activity">
    <reaction evidence="3">
        <text>L-seryl-[protein] + ATP = O-phospho-L-seryl-[protein] + ADP + H(+)</text>
        <dbReference type="Rhea" id="RHEA:17989"/>
        <dbReference type="Rhea" id="RHEA-COMP:9863"/>
        <dbReference type="Rhea" id="RHEA-COMP:11604"/>
        <dbReference type="ChEBI" id="CHEBI:15378"/>
        <dbReference type="ChEBI" id="CHEBI:29999"/>
        <dbReference type="ChEBI" id="CHEBI:30616"/>
        <dbReference type="ChEBI" id="CHEBI:83421"/>
        <dbReference type="ChEBI" id="CHEBI:456216"/>
        <dbReference type="EC" id="2.7.11.24"/>
    </reaction>
</comment>
<comment type="catalytic activity">
    <reaction evidence="3">
        <text>L-threonyl-[protein] + ATP = O-phospho-L-threonyl-[protein] + ADP + H(+)</text>
        <dbReference type="Rhea" id="RHEA:46608"/>
        <dbReference type="Rhea" id="RHEA-COMP:11060"/>
        <dbReference type="Rhea" id="RHEA-COMP:11605"/>
        <dbReference type="ChEBI" id="CHEBI:15378"/>
        <dbReference type="ChEBI" id="CHEBI:30013"/>
        <dbReference type="ChEBI" id="CHEBI:30616"/>
        <dbReference type="ChEBI" id="CHEBI:61977"/>
        <dbReference type="ChEBI" id="CHEBI:456216"/>
        <dbReference type="EC" id="2.7.11.24"/>
    </reaction>
</comment>
<comment type="cofactor">
    <cofactor evidence="3">
        <name>Mg(2+)</name>
        <dbReference type="ChEBI" id="CHEBI:18420"/>
    </cofactor>
</comment>
<comment type="activity regulation">
    <text evidence="3">Activated by cell stresses such as DNA damage, heat shock, osmotic shock, anisomycin and sodium arsenite, as well as pro-inflammatory stimuli such as bacterial lipopolysaccharide (LPS) and interleukin-1. Activation occurs through dual phosphorylation of Thr-180 and Tyr-182 by either of two dual specificity kinases, MAP2K3/MKK3 or MAP2K6/MKK6, and potentially also MAP2K4/MKK4, as well as by TAB1-mediated autophosphorylation. MAPK14 phosphorylated on both Thr-180 and Tyr-182 is 10-20-fold more active than MAPK14 phosphorylated only on Thr-180, whereas MAPK14 phosphorylated on Tyr-182 alone is inactive. whereas Thr-180 is necessary for catalysis, Tyr-182 may be required for auto-activation and substrate recognition. Phosphorylated at Tyr-323 by ZAP70 in an alternative activation pathway in response to TCR signaling in T-cells. This alternative pathway is inhibited by GADD45A. Inhibited by dual specificity phosphatases, such as DUSP1, DUSP10, and DUSP16. Specifically inhibited by the binding of pyridinyl-imidazole compounds, which are cytokine-suppressive anti-inflammatory drugs (CSAID). SB203580 is an inhibitor of MAPK14 (By similarity).</text>
</comment>
<comment type="subunit">
    <text evidence="1 2 3">Component of a signaling complex containing at least AKAP13, PKN1, MAPK14, ZAK and MAP2K3. Within this complex, AKAP13 interacts directly with PKN1, which in turn recruits MAPK14, MAP2K3 and ZAK (By similarity). Binds to a kinase interaction motif within the protein tyrosine phosphatase, PTPRR (By similarity). This interaction retains MAPK14 in the cytoplasm and prevents nuclear accumulation (By similarity). Interacts with SPAG9 and GADD45A (By similarity). Interacts with CDC25B, CDC25C, DUSP1, DUSP10, DUSP16, NP60, SUPT20H and TAB1. Interacts with casein kinase II subunits CSNK2A1 and CSNK2B. Interacts with PPM1D. Interacts with CDK5RAP3; recruits PPM1D to MAPK14 and may regulate its dephosphorylation (By similarity). Interacts with DUSP2; this interaction does not lead to catalytic activation of DUSP2 and dephosphrylation of MAPK14 (By similarity).</text>
</comment>
<comment type="subcellular location">
    <subcellularLocation>
        <location evidence="3">Cytoplasm</location>
    </subcellularLocation>
    <subcellularLocation>
        <location evidence="3">Nucleus</location>
    </subcellularLocation>
</comment>
<comment type="alternative products">
    <event type="alternative splicing"/>
    <isoform>
        <id>P70618-1</id>
        <name>1</name>
        <sequence type="displayed"/>
    </isoform>
    <isoform>
        <id>P70618-2</id>
        <name>2</name>
        <sequence type="described" ref="VSP_004847"/>
    </isoform>
</comment>
<comment type="domain">
    <text>The TXY motif contains the threonine and tyrosine residues whose phosphorylation activates the MAP kinases.</text>
</comment>
<comment type="PTM">
    <text evidence="1 3">Dually phosphorylated on Thr-180 and Tyr-182 by the MAP2Ks MAP2K3/MKK3, MAP2K4/MKK4 and MAP2K6/MKK6 in response to inflammatory cytokines, environmental stress or growth factors, which activates the enzyme. Dual phosphorylation can also be mediated by TAB1-mediated autophosphorylation. TCR engagement in T-cells also leads to Tyr-323 phosphorylation by ZAP70. Dephosphorylated and inactivated by DUPS1, DUSP10 and DUSP16 (By similarity). PPM1D also mediates dephosphorylation and inactivation of MAPK14 (By similarity).</text>
</comment>
<comment type="PTM">
    <text evidence="3">Acetylated at Lys-53 and Lys-152 by KAT2B and EP300. Acetylation at Lys-53 increases the affinity for ATP and enhances kinase activity. Lys-53 and Lys-152 are deacetylated by HDAC3 (By similarity).</text>
</comment>
<comment type="PTM">
    <text evidence="3">Ubiquitinated. Ubiquitination leads to degradation by the proteasome pathway (By similarity).</text>
</comment>
<comment type="similarity">
    <text evidence="6">Belongs to the protein kinase superfamily. CMGC Ser/Thr protein kinase family. MAP kinase subfamily.</text>
</comment>
<keyword id="KW-0007">Acetylation</keyword>
<keyword id="KW-0025">Alternative splicing</keyword>
<keyword id="KW-0053">Apoptosis</keyword>
<keyword id="KW-0067">ATP-binding</keyword>
<keyword id="KW-0963">Cytoplasm</keyword>
<keyword id="KW-0418">Kinase</keyword>
<keyword id="KW-0547">Nucleotide-binding</keyword>
<keyword id="KW-0539">Nucleus</keyword>
<keyword id="KW-0597">Phosphoprotein</keyword>
<keyword id="KW-1185">Reference proteome</keyword>
<keyword id="KW-0723">Serine/threonine-protein kinase</keyword>
<keyword id="KW-0346">Stress response</keyword>
<keyword id="KW-0804">Transcription</keyword>
<keyword id="KW-0805">Transcription regulation</keyword>
<keyword id="KW-0808">Transferase</keyword>
<keyword id="KW-0832">Ubl conjugation</keyword>
<sequence>MSQERPTFYRQELNKTVWEVPERYQNLSPVGSGAYGSVCAAFDTKTGHRVAVKKLSRPFQSIIHAKRTYRELRLLKHMKHENVIGLLDVFTPARSLEEFNDVYLVTHLMGADLNNIVKCQKLTDDHVQFLIYQILRGLKYIHSADIIHRDLKPSNLAVNEDCELKILDFGLARHTDDEMTGYVATRWYRAPEIMLNWMHYNQTVDIWSVGCIMAELLTGRTLFPGTDHIDQLKLILRLVGTPGAELLKKISSESARNYIQSLAQMPKMNFANVFIGANPLAVDLLEKMLVLDSDKRITAAQALAHAYFAQYHDPDDEPVAEPYDQSFESRDFLIDEWKSLTYDEVISFVPPPLDQEEMES</sequence>
<organism>
    <name type="scientific">Rattus norvegicus</name>
    <name type="common">Rat</name>
    <dbReference type="NCBI Taxonomy" id="10116"/>
    <lineage>
        <taxon>Eukaryota</taxon>
        <taxon>Metazoa</taxon>
        <taxon>Chordata</taxon>
        <taxon>Craniata</taxon>
        <taxon>Vertebrata</taxon>
        <taxon>Euteleostomi</taxon>
        <taxon>Mammalia</taxon>
        <taxon>Eutheria</taxon>
        <taxon>Euarchontoglires</taxon>
        <taxon>Glires</taxon>
        <taxon>Rodentia</taxon>
        <taxon>Myomorpha</taxon>
        <taxon>Muroidea</taxon>
        <taxon>Muridae</taxon>
        <taxon>Murinae</taxon>
        <taxon>Rattus</taxon>
    </lineage>
</organism>
<dbReference type="EC" id="2.7.11.24"/>
<dbReference type="EMBL" id="U73142">
    <property type="protein sequence ID" value="AAC71059.1"/>
    <property type="molecule type" value="mRNA"/>
</dbReference>
<dbReference type="EMBL" id="U91847">
    <property type="protein sequence ID" value="AAB51285.1"/>
    <property type="molecule type" value="mRNA"/>
</dbReference>
<dbReference type="EMBL" id="AF346293">
    <property type="protein sequence ID" value="AAK15541.1"/>
    <property type="molecule type" value="mRNA"/>
</dbReference>
<dbReference type="BMRB" id="P70618"/>
<dbReference type="SMR" id="P70618"/>
<dbReference type="DIP" id="DIP-29878N"/>
<dbReference type="FunCoup" id="P70618">
    <property type="interactions" value="3101"/>
</dbReference>
<dbReference type="IntAct" id="P70618">
    <property type="interactions" value="2"/>
</dbReference>
<dbReference type="MINT" id="P70618"/>
<dbReference type="STRING" id="10116.ENSRNOP00000000617"/>
<dbReference type="BindingDB" id="P70618"/>
<dbReference type="ChEMBL" id="CHEMBL4825"/>
<dbReference type="GlyGen" id="P70618">
    <property type="glycosylation" value="1 site, 1 O-linked glycan (1 site)"/>
</dbReference>
<dbReference type="iPTMnet" id="P70618"/>
<dbReference type="PhosphoSitePlus" id="P70618"/>
<dbReference type="jPOST" id="P70618"/>
<dbReference type="PaxDb" id="10116-ENSRNOP00000000617"/>
<dbReference type="UCSC" id="RGD:70496">
    <molecule id="P70618-1"/>
    <property type="organism name" value="rat"/>
</dbReference>
<dbReference type="AGR" id="RGD:70496"/>
<dbReference type="RGD" id="70496">
    <property type="gene designation" value="Mapk14"/>
</dbReference>
<dbReference type="eggNOG" id="KOG0660">
    <property type="taxonomic scope" value="Eukaryota"/>
</dbReference>
<dbReference type="InParanoid" id="P70618"/>
<dbReference type="PhylomeDB" id="P70618"/>
<dbReference type="BRENDA" id="2.7.11.24">
    <property type="organism ID" value="5301"/>
</dbReference>
<dbReference type="Reactome" id="R-RNO-168638">
    <property type="pathway name" value="NOD1/2 Signaling Pathway"/>
</dbReference>
<dbReference type="Reactome" id="R-RNO-171007">
    <property type="pathway name" value="p38MAPK events"/>
</dbReference>
<dbReference type="Reactome" id="R-RNO-198753">
    <property type="pathway name" value="ERK/MAPK targets"/>
</dbReference>
<dbReference type="Reactome" id="R-RNO-2559580">
    <property type="pathway name" value="Oxidative Stress Induced Senescence"/>
</dbReference>
<dbReference type="Reactome" id="R-RNO-418592">
    <property type="pathway name" value="ADP signalling through P2Y purinoceptor 1"/>
</dbReference>
<dbReference type="Reactome" id="R-RNO-432142">
    <property type="pathway name" value="Platelet sensitization by LDL"/>
</dbReference>
<dbReference type="Reactome" id="R-RNO-4420097">
    <property type="pathway name" value="VEGFA-VEGFR2 Pathway"/>
</dbReference>
<dbReference type="Reactome" id="R-RNO-450302">
    <property type="pathway name" value="activated TAK1 mediates p38 MAPK activation"/>
</dbReference>
<dbReference type="Reactome" id="R-RNO-450341">
    <property type="pathway name" value="Activation of the AP-1 family of transcription factors"/>
</dbReference>
<dbReference type="Reactome" id="R-RNO-525793">
    <property type="pathway name" value="Myogenesis"/>
</dbReference>
<dbReference type="Reactome" id="R-RNO-5668599">
    <property type="pathway name" value="RHO GTPases Activate NADPH Oxidases"/>
</dbReference>
<dbReference type="Reactome" id="R-RNO-6798695">
    <property type="pathway name" value="Neutrophil degranulation"/>
</dbReference>
<dbReference type="Reactome" id="R-RNO-6804756">
    <property type="pathway name" value="Regulation of TP53 Activity through Phosphorylation"/>
</dbReference>
<dbReference type="PRO" id="PR:P70618"/>
<dbReference type="Proteomes" id="UP000002494">
    <property type="component" value="Unplaced"/>
</dbReference>
<dbReference type="GO" id="GO:0005737">
    <property type="term" value="C:cytoplasm"/>
    <property type="evidence" value="ECO:0000250"/>
    <property type="project" value="UniProtKB"/>
</dbReference>
<dbReference type="GO" id="GO:0005829">
    <property type="term" value="C:cytosol"/>
    <property type="evidence" value="ECO:0000266"/>
    <property type="project" value="RGD"/>
</dbReference>
<dbReference type="GO" id="GO:0098978">
    <property type="term" value="C:glutamatergic synapse"/>
    <property type="evidence" value="ECO:0000266"/>
    <property type="project" value="RGD"/>
</dbReference>
<dbReference type="GO" id="GO:0005739">
    <property type="term" value="C:mitochondrion"/>
    <property type="evidence" value="ECO:0000266"/>
    <property type="project" value="RGD"/>
</dbReference>
<dbReference type="GO" id="GO:0005634">
    <property type="term" value="C:nucleus"/>
    <property type="evidence" value="ECO:0000250"/>
    <property type="project" value="UniProtKB"/>
</dbReference>
<dbReference type="GO" id="GO:0000922">
    <property type="term" value="C:spindle pole"/>
    <property type="evidence" value="ECO:0000266"/>
    <property type="project" value="RGD"/>
</dbReference>
<dbReference type="GO" id="GO:0005524">
    <property type="term" value="F:ATP binding"/>
    <property type="evidence" value="ECO:0000314"/>
    <property type="project" value="RGD"/>
</dbReference>
<dbReference type="GO" id="GO:0019899">
    <property type="term" value="F:enzyme binding"/>
    <property type="evidence" value="ECO:0000266"/>
    <property type="project" value="RGD"/>
</dbReference>
<dbReference type="GO" id="GO:0016301">
    <property type="term" value="F:kinase activity"/>
    <property type="evidence" value="ECO:0000266"/>
    <property type="project" value="RGD"/>
</dbReference>
<dbReference type="GO" id="GO:0004707">
    <property type="term" value="F:MAP kinase activity"/>
    <property type="evidence" value="ECO:0000314"/>
    <property type="project" value="RGD"/>
</dbReference>
<dbReference type="GO" id="GO:0048273">
    <property type="term" value="F:mitogen-activated protein kinase p38 binding"/>
    <property type="evidence" value="ECO:0000266"/>
    <property type="project" value="RGD"/>
</dbReference>
<dbReference type="GO" id="GO:0051525">
    <property type="term" value="F:NFAT protein binding"/>
    <property type="evidence" value="ECO:0000266"/>
    <property type="project" value="RGD"/>
</dbReference>
<dbReference type="GO" id="GO:0004672">
    <property type="term" value="F:protein kinase activity"/>
    <property type="evidence" value="ECO:0000266"/>
    <property type="project" value="RGD"/>
</dbReference>
<dbReference type="GO" id="GO:0019903">
    <property type="term" value="F:protein phosphatase binding"/>
    <property type="evidence" value="ECO:0000266"/>
    <property type="project" value="RGD"/>
</dbReference>
<dbReference type="GO" id="GO:0106310">
    <property type="term" value="F:protein serine kinase activity"/>
    <property type="evidence" value="ECO:0007669"/>
    <property type="project" value="RHEA"/>
</dbReference>
<dbReference type="GO" id="GO:0004674">
    <property type="term" value="F:protein serine/threonine kinase activity"/>
    <property type="evidence" value="ECO:0000266"/>
    <property type="project" value="RGD"/>
</dbReference>
<dbReference type="GO" id="GO:0001525">
    <property type="term" value="P:angiogenesis"/>
    <property type="evidence" value="ECO:0000266"/>
    <property type="project" value="RGD"/>
</dbReference>
<dbReference type="GO" id="GO:0006915">
    <property type="term" value="P:apoptotic process"/>
    <property type="evidence" value="ECO:0007669"/>
    <property type="project" value="UniProtKB-KW"/>
</dbReference>
<dbReference type="GO" id="GO:0060348">
    <property type="term" value="P:bone development"/>
    <property type="evidence" value="ECO:0000266"/>
    <property type="project" value="RGD"/>
</dbReference>
<dbReference type="GO" id="GO:0001502">
    <property type="term" value="P:cartilage condensation"/>
    <property type="evidence" value="ECO:0000266"/>
    <property type="project" value="RGD"/>
</dbReference>
<dbReference type="GO" id="GO:0000902">
    <property type="term" value="P:cell morphogenesis"/>
    <property type="evidence" value="ECO:0000266"/>
    <property type="project" value="RGD"/>
</dbReference>
<dbReference type="GO" id="GO:0007178">
    <property type="term" value="P:cell surface receptor protein serine/threonine kinase signaling pathway"/>
    <property type="evidence" value="ECO:0000266"/>
    <property type="project" value="RGD"/>
</dbReference>
<dbReference type="GO" id="GO:0071479">
    <property type="term" value="P:cellular response to ionizing radiation"/>
    <property type="evidence" value="ECO:0000266"/>
    <property type="project" value="RGD"/>
</dbReference>
<dbReference type="GO" id="GO:0071222">
    <property type="term" value="P:cellular response to lipopolysaccharide"/>
    <property type="evidence" value="ECO:0000266"/>
    <property type="project" value="RGD"/>
</dbReference>
<dbReference type="GO" id="GO:0071223">
    <property type="term" value="P:cellular response to lipoteichoic acid"/>
    <property type="evidence" value="ECO:0000266"/>
    <property type="project" value="RGD"/>
</dbReference>
<dbReference type="GO" id="GO:0071560">
    <property type="term" value="P:cellular response to transforming growth factor beta stimulus"/>
    <property type="evidence" value="ECO:0000270"/>
    <property type="project" value="RGD"/>
</dbReference>
<dbReference type="GO" id="GO:0071356">
    <property type="term" value="P:cellular response to tumor necrosis factor"/>
    <property type="evidence" value="ECO:0000266"/>
    <property type="project" value="RGD"/>
</dbReference>
<dbReference type="GO" id="GO:0071493">
    <property type="term" value="P:cellular response to UV-B"/>
    <property type="evidence" value="ECO:0000266"/>
    <property type="project" value="RGD"/>
</dbReference>
<dbReference type="GO" id="GO:0035924">
    <property type="term" value="P:cellular response to vascular endothelial growth factor stimulus"/>
    <property type="evidence" value="ECO:0000266"/>
    <property type="project" value="RGD"/>
</dbReference>
<dbReference type="GO" id="GO:0002062">
    <property type="term" value="P:chondrocyte differentiation"/>
    <property type="evidence" value="ECO:0000266"/>
    <property type="project" value="RGD"/>
</dbReference>
<dbReference type="GO" id="GO:0046323">
    <property type="term" value="P:D-glucose import"/>
    <property type="evidence" value="ECO:0000266"/>
    <property type="project" value="RGD"/>
</dbReference>
<dbReference type="GO" id="GO:0000077">
    <property type="term" value="P:DNA damage checkpoint signaling"/>
    <property type="evidence" value="ECO:0000266"/>
    <property type="project" value="RGD"/>
</dbReference>
<dbReference type="GO" id="GO:0006974">
    <property type="term" value="P:DNA damage response"/>
    <property type="evidence" value="ECO:0000266"/>
    <property type="project" value="RGD"/>
</dbReference>
<dbReference type="GO" id="GO:0019395">
    <property type="term" value="P:fatty acid oxidation"/>
    <property type="evidence" value="ECO:0000266"/>
    <property type="project" value="RGD"/>
</dbReference>
<dbReference type="GO" id="GO:0006006">
    <property type="term" value="P:glucose metabolic process"/>
    <property type="evidence" value="ECO:0000266"/>
    <property type="project" value="RGD"/>
</dbReference>
<dbReference type="GO" id="GO:0035556">
    <property type="term" value="P:intracellular signal transduction"/>
    <property type="evidence" value="ECO:0000250"/>
    <property type="project" value="UniProtKB"/>
</dbReference>
<dbReference type="GO" id="GO:0031663">
    <property type="term" value="P:lipopolysaccharide-mediated signaling pathway"/>
    <property type="evidence" value="ECO:0000266"/>
    <property type="project" value="RGD"/>
</dbReference>
<dbReference type="GO" id="GO:0000165">
    <property type="term" value="P:MAPK cascade"/>
    <property type="evidence" value="ECO:0000266"/>
    <property type="project" value="RGD"/>
</dbReference>
<dbReference type="GO" id="GO:0090090">
    <property type="term" value="P:negative regulation of canonical Wnt signaling pathway"/>
    <property type="evidence" value="ECO:0000266"/>
    <property type="project" value="RGD"/>
</dbReference>
<dbReference type="GO" id="GO:0035331">
    <property type="term" value="P:negative regulation of hippo signaling"/>
    <property type="evidence" value="ECO:0000266"/>
    <property type="project" value="RGD"/>
</dbReference>
<dbReference type="GO" id="GO:0001649">
    <property type="term" value="P:osteoblast differentiation"/>
    <property type="evidence" value="ECO:0000266"/>
    <property type="project" value="RGD"/>
</dbReference>
<dbReference type="GO" id="GO:0030316">
    <property type="term" value="P:osteoclast differentiation"/>
    <property type="evidence" value="ECO:0000266"/>
    <property type="project" value="RGD"/>
</dbReference>
<dbReference type="GO" id="GO:0038066">
    <property type="term" value="P:p38MAPK cascade"/>
    <property type="evidence" value="ECO:0000250"/>
    <property type="project" value="UniProtKB"/>
</dbReference>
<dbReference type="GO" id="GO:0001890">
    <property type="term" value="P:placenta development"/>
    <property type="evidence" value="ECO:0000266"/>
    <property type="project" value="RGD"/>
</dbReference>
<dbReference type="GO" id="GO:0090336">
    <property type="term" value="P:positive regulation of brown fat cell differentiation"/>
    <property type="evidence" value="ECO:0000266"/>
    <property type="project" value="RGD"/>
</dbReference>
<dbReference type="GO" id="GO:0060045">
    <property type="term" value="P:positive regulation of cardiac muscle cell proliferation"/>
    <property type="evidence" value="ECO:0000266"/>
    <property type="project" value="RGD"/>
</dbReference>
<dbReference type="GO" id="GO:0046326">
    <property type="term" value="P:positive regulation of D-glucose import"/>
    <property type="evidence" value="ECO:0000266"/>
    <property type="project" value="RGD"/>
</dbReference>
<dbReference type="GO" id="GO:0045648">
    <property type="term" value="P:positive regulation of erythrocyte differentiation"/>
    <property type="evidence" value="ECO:0000266"/>
    <property type="project" value="RGD"/>
</dbReference>
<dbReference type="GO" id="GO:0010628">
    <property type="term" value="P:positive regulation of gene expression"/>
    <property type="evidence" value="ECO:0000266"/>
    <property type="project" value="RGD"/>
</dbReference>
<dbReference type="GO" id="GO:0032735">
    <property type="term" value="P:positive regulation of interleukin-12 production"/>
    <property type="evidence" value="ECO:0000266"/>
    <property type="project" value="RGD"/>
</dbReference>
<dbReference type="GO" id="GO:0045663">
    <property type="term" value="P:positive regulation of myoblast differentiation"/>
    <property type="evidence" value="ECO:0000250"/>
    <property type="project" value="UniProtKB"/>
</dbReference>
<dbReference type="GO" id="GO:1901741">
    <property type="term" value="P:positive regulation of myoblast fusion"/>
    <property type="evidence" value="ECO:0000250"/>
    <property type="project" value="UniProtKB"/>
</dbReference>
<dbReference type="GO" id="GO:0010831">
    <property type="term" value="P:positive regulation of myotube differentiation"/>
    <property type="evidence" value="ECO:0000250"/>
    <property type="project" value="UniProtKB"/>
</dbReference>
<dbReference type="GO" id="GO:0042307">
    <property type="term" value="P:positive regulation of protein import into nucleus"/>
    <property type="evidence" value="ECO:0000266"/>
    <property type="project" value="RGD"/>
</dbReference>
<dbReference type="GO" id="GO:2000379">
    <property type="term" value="P:positive regulation of reactive oxygen species metabolic process"/>
    <property type="evidence" value="ECO:0000266"/>
    <property type="project" value="RGD"/>
</dbReference>
<dbReference type="GO" id="GO:0045944">
    <property type="term" value="P:positive regulation of transcription by RNA polymerase II"/>
    <property type="evidence" value="ECO:0000315"/>
    <property type="project" value="RGD"/>
</dbReference>
<dbReference type="GO" id="GO:1900015">
    <property type="term" value="P:regulation of cytokine production involved in inflammatory response"/>
    <property type="evidence" value="ECO:0000266"/>
    <property type="project" value="RGD"/>
</dbReference>
<dbReference type="GO" id="GO:0006355">
    <property type="term" value="P:regulation of DNA-templated transcription"/>
    <property type="evidence" value="ECO:0000266"/>
    <property type="project" value="RGD"/>
</dbReference>
<dbReference type="GO" id="GO:0030278">
    <property type="term" value="P:regulation of ossification"/>
    <property type="evidence" value="ECO:0000266"/>
    <property type="project" value="RGD"/>
</dbReference>
<dbReference type="GO" id="GO:0099179">
    <property type="term" value="P:regulation of synaptic membrane adhesion"/>
    <property type="evidence" value="ECO:0000266"/>
    <property type="project" value="RGD"/>
</dbReference>
<dbReference type="GO" id="GO:0006357">
    <property type="term" value="P:regulation of transcription by RNA polymerase II"/>
    <property type="evidence" value="ECO:0000250"/>
    <property type="project" value="UniProtKB"/>
</dbReference>
<dbReference type="GO" id="GO:0002021">
    <property type="term" value="P:response to dietary excess"/>
    <property type="evidence" value="ECO:0000266"/>
    <property type="project" value="RGD"/>
</dbReference>
<dbReference type="GO" id="GO:0009749">
    <property type="term" value="P:response to glucose"/>
    <property type="evidence" value="ECO:0000270"/>
    <property type="project" value="RGD"/>
</dbReference>
<dbReference type="GO" id="GO:0032868">
    <property type="term" value="P:response to insulin"/>
    <property type="evidence" value="ECO:0000266"/>
    <property type="project" value="RGD"/>
</dbReference>
<dbReference type="GO" id="GO:0032496">
    <property type="term" value="P:response to lipopolysaccharide"/>
    <property type="evidence" value="ECO:0000266"/>
    <property type="project" value="RGD"/>
</dbReference>
<dbReference type="GO" id="GO:0032495">
    <property type="term" value="P:response to muramyl dipeptide"/>
    <property type="evidence" value="ECO:0000266"/>
    <property type="project" value="RGD"/>
</dbReference>
<dbReference type="GO" id="GO:0035994">
    <property type="term" value="P:response to muscle stretch"/>
    <property type="evidence" value="ECO:0000266"/>
    <property type="project" value="RGD"/>
</dbReference>
<dbReference type="GO" id="GO:0042770">
    <property type="term" value="P:signal transduction in response to DNA damage"/>
    <property type="evidence" value="ECO:0000266"/>
    <property type="project" value="RGD"/>
</dbReference>
<dbReference type="GO" id="GO:0007519">
    <property type="term" value="P:skeletal muscle tissue development"/>
    <property type="evidence" value="ECO:0000266"/>
    <property type="project" value="RGD"/>
</dbReference>
<dbReference type="GO" id="GO:0048863">
    <property type="term" value="P:stem cell differentiation"/>
    <property type="evidence" value="ECO:0000266"/>
    <property type="project" value="RGD"/>
</dbReference>
<dbReference type="GO" id="GO:0051403">
    <property type="term" value="P:stress-activated MAPK cascade"/>
    <property type="evidence" value="ECO:0000314"/>
    <property type="project" value="RGD"/>
</dbReference>
<dbReference type="GO" id="GO:0031098">
    <property type="term" value="P:stress-activated protein kinase signaling cascade"/>
    <property type="evidence" value="ECO:0000266"/>
    <property type="project" value="RGD"/>
</dbReference>
<dbReference type="GO" id="GO:0090400">
    <property type="term" value="P:stress-induced premature senescence"/>
    <property type="evidence" value="ECO:0000266"/>
    <property type="project" value="RGD"/>
</dbReference>
<dbReference type="GO" id="GO:0051146">
    <property type="term" value="P:striated muscle cell differentiation"/>
    <property type="evidence" value="ECO:0000266"/>
    <property type="project" value="RGD"/>
</dbReference>
<dbReference type="GO" id="GO:0006366">
    <property type="term" value="P:transcription by RNA polymerase II"/>
    <property type="evidence" value="ECO:0000266"/>
    <property type="project" value="RGD"/>
</dbReference>
<dbReference type="GO" id="GO:0048010">
    <property type="term" value="P:vascular endothelial growth factor receptor signaling pathway"/>
    <property type="evidence" value="ECO:0000266"/>
    <property type="project" value="RGD"/>
</dbReference>
<dbReference type="CDD" id="cd07877">
    <property type="entry name" value="STKc_p38alpha"/>
    <property type="match status" value="1"/>
</dbReference>
<dbReference type="FunFam" id="1.10.510.10:FF:000063">
    <property type="entry name" value="Mitogen-activated protein kinase 14"/>
    <property type="match status" value="1"/>
</dbReference>
<dbReference type="FunFam" id="3.30.200.20:FF:000769">
    <property type="entry name" value="Mitogen-activated protein kinase 14"/>
    <property type="match status" value="1"/>
</dbReference>
<dbReference type="Gene3D" id="3.30.200.20">
    <property type="entry name" value="Phosphorylase Kinase, domain 1"/>
    <property type="match status" value="1"/>
</dbReference>
<dbReference type="Gene3D" id="1.10.510.10">
    <property type="entry name" value="Transferase(Phosphotransferase) domain 1"/>
    <property type="match status" value="1"/>
</dbReference>
<dbReference type="InterPro" id="IPR011009">
    <property type="entry name" value="Kinase-like_dom_sf"/>
</dbReference>
<dbReference type="InterPro" id="IPR050117">
    <property type="entry name" value="MAP_kinase"/>
</dbReference>
<dbReference type="InterPro" id="IPR003527">
    <property type="entry name" value="MAP_kinase_CS"/>
</dbReference>
<dbReference type="InterPro" id="IPR038784">
    <property type="entry name" value="MAPK14"/>
</dbReference>
<dbReference type="InterPro" id="IPR008352">
    <property type="entry name" value="MAPK_p38-like"/>
</dbReference>
<dbReference type="InterPro" id="IPR000719">
    <property type="entry name" value="Prot_kinase_dom"/>
</dbReference>
<dbReference type="InterPro" id="IPR017441">
    <property type="entry name" value="Protein_kinase_ATP_BS"/>
</dbReference>
<dbReference type="PANTHER" id="PTHR24055">
    <property type="entry name" value="MITOGEN-ACTIVATED PROTEIN KINASE"/>
    <property type="match status" value="1"/>
</dbReference>
<dbReference type="Pfam" id="PF00069">
    <property type="entry name" value="Pkinase"/>
    <property type="match status" value="1"/>
</dbReference>
<dbReference type="PRINTS" id="PR01773">
    <property type="entry name" value="P38MAPKINASE"/>
</dbReference>
<dbReference type="SMART" id="SM00220">
    <property type="entry name" value="S_TKc"/>
    <property type="match status" value="1"/>
</dbReference>
<dbReference type="SUPFAM" id="SSF56112">
    <property type="entry name" value="Protein kinase-like (PK-like)"/>
    <property type="match status" value="1"/>
</dbReference>
<dbReference type="PROSITE" id="PS01351">
    <property type="entry name" value="MAPK"/>
    <property type="match status" value="1"/>
</dbReference>
<dbReference type="PROSITE" id="PS00107">
    <property type="entry name" value="PROTEIN_KINASE_ATP"/>
    <property type="match status" value="1"/>
</dbReference>
<dbReference type="PROSITE" id="PS50011">
    <property type="entry name" value="PROTEIN_KINASE_DOM"/>
    <property type="match status" value="1"/>
</dbReference>
<proteinExistence type="evidence at protein level"/>
<name>MK14_RAT</name>
<reference key="1">
    <citation type="journal article" date="1998" name="J. Mol. Endocrinol.">
        <title>Suppression subtractive hybridization (SSH) identifies prolactin stimulation of p38 MAP kinase gene expression in Nb2 T lymphoma cells: molecular cloning of rat p38 MAP kinase.</title>
        <authorList>
            <person name="Nemeth E."/>
            <person name="Bole-Feysot C."/>
            <person name="Tashima L.S."/>
        </authorList>
    </citation>
    <scope>NUCLEOTIDE SEQUENCE [MRNA] (ISOFORM 1)</scope>
</reference>
<reference key="2">
    <citation type="submission" date="1997-04" db="EMBL/GenBank/DDBJ databases">
        <authorList>
            <person name="Garcia G.E."/>
            <person name="Han J."/>
            <person name="Feng L."/>
        </authorList>
    </citation>
    <scope>NUCLEOTIDE SEQUENCE [MRNA] (ISOFORM 1)</scope>
    <source>
        <strain>Lewis</strain>
        <tissue>Kidney</tissue>
    </source>
</reference>
<reference key="3">
    <citation type="submission" date="2001-02" db="EMBL/GenBank/DDBJ databases">
        <authorList>
            <person name="Reick M.E."/>
            <person name="Goldsmith E.J."/>
        </authorList>
    </citation>
    <scope>NUCLEOTIDE SEQUENCE [MRNA] (ISOFORM 2)</scope>
</reference>
<reference key="4">
    <citation type="journal article" date="2002" name="Biol. Chem.">
        <title>In the cellular garden of forking paths: how p38 MAPKs signal for downstream assistance.</title>
        <authorList>
            <person name="Shi Y."/>
            <person name="Gaestel M."/>
        </authorList>
    </citation>
    <scope>REVIEW ON FUNCTION</scope>
</reference>
<reference key="5">
    <citation type="journal article" date="2010" name="Biochem. J.">
        <title>Mechanisms and functions of p38 MAPK signalling.</title>
        <authorList>
            <person name="Cuadrado A."/>
            <person name="Nebreda A.R."/>
        </authorList>
    </citation>
    <scope>REVIEW ON ACTIVITY REGULATION</scope>
    <scope>REVIEW ON FUNCTION</scope>
</reference>
<reference key="6">
    <citation type="journal article" date="2012" name="Nat. Commun.">
        <title>Quantitative maps of protein phosphorylation sites across 14 different rat organs and tissues.</title>
        <authorList>
            <person name="Lundby A."/>
            <person name="Secher A."/>
            <person name="Lage K."/>
            <person name="Nordsborg N.B."/>
            <person name="Dmytriyev A."/>
            <person name="Lundby C."/>
            <person name="Olsen J.V."/>
        </authorList>
    </citation>
    <scope>PHOSPHORYLATION [LARGE SCALE ANALYSIS] AT SER-2; THR-180 AND TYR-182</scope>
    <scope>IDENTIFICATION BY MASS SPECTROMETRY [LARGE SCALE ANALYSIS]</scope>
</reference>
<feature type="initiator methionine" description="Removed" evidence="3">
    <location>
        <position position="1"/>
    </location>
</feature>
<feature type="chain" id="PRO_0000186294" description="Mitogen-activated protein kinase 14">
    <location>
        <begin position="2"/>
        <end position="360"/>
    </location>
</feature>
<feature type="domain" description="Protein kinase" evidence="4">
    <location>
        <begin position="24"/>
        <end position="308"/>
    </location>
</feature>
<feature type="short sequence motif" description="TXY">
    <location>
        <begin position="180"/>
        <end position="182"/>
    </location>
</feature>
<feature type="active site" description="Proton acceptor" evidence="4">
    <location>
        <position position="150"/>
    </location>
</feature>
<feature type="binding site" evidence="4">
    <location>
        <begin position="30"/>
        <end position="38"/>
    </location>
    <ligand>
        <name>ATP</name>
        <dbReference type="ChEBI" id="CHEBI:30616"/>
    </ligand>
</feature>
<feature type="binding site" evidence="4">
    <location>
        <position position="53"/>
    </location>
    <ligand>
        <name>ATP</name>
        <dbReference type="ChEBI" id="CHEBI:30616"/>
    </ligand>
</feature>
<feature type="modified residue" description="N-acetylserine" evidence="3">
    <location>
        <position position="2"/>
    </location>
</feature>
<feature type="modified residue" description="Phosphoserine" evidence="8">
    <location>
        <position position="2"/>
    </location>
</feature>
<feature type="modified residue" description="Phosphothreonine" evidence="3">
    <location>
        <position position="16"/>
    </location>
</feature>
<feature type="modified residue" description="N6-acetyllysine" evidence="3">
    <location>
        <position position="53"/>
    </location>
</feature>
<feature type="modified residue" description="N6-acetyllysine" evidence="3">
    <location>
        <position position="152"/>
    </location>
</feature>
<feature type="modified residue" description="Phosphothreonine" evidence="8">
    <location>
        <position position="180"/>
    </location>
</feature>
<feature type="modified residue" description="Phosphotyrosine" evidence="8">
    <location>
        <position position="182"/>
    </location>
</feature>
<feature type="modified residue" description="Phosphotyrosine; by ZAP70" evidence="3">
    <location>
        <position position="323"/>
    </location>
</feature>
<feature type="splice variant" id="VSP_004847" description="In isoform 2." evidence="5">
    <original>DQLKLILRLVGTPGAELLKKISSES</original>
    <variation>NQLQQIMRLTGTPPAYLINRMPSHE</variation>
    <location>
        <begin position="230"/>
        <end position="254"/>
    </location>
</feature>
<feature type="sequence conflict" description="In Ref. 2; AAB51285." evidence="6" ref="2">
    <original>F</original>
    <variation>V</variation>
    <location>
        <position position="59"/>
    </location>
</feature>
<feature type="sequence conflict" description="In Ref. 2; AAB51285." evidence="6" ref="2">
    <original>S</original>
    <variation>P</variation>
    <location>
        <position position="61"/>
    </location>
</feature>
<feature type="sequence conflict" description="In Ref. 2; AAB51285." evidence="6" ref="2">
    <original>T</original>
    <variation>S</variation>
    <location>
        <position position="68"/>
    </location>
</feature>
<feature type="sequence conflict" description="In Ref. 2; AAB51285 and 3; AAK15541." evidence="6" ref="2 3">
    <original>E</original>
    <variation>D</variation>
    <location>
        <position position="321"/>
    </location>
</feature>
<feature type="sequence conflict" description="In Ref. 2; AAB51285 and 3; AAK15541." evidence="6" ref="2 3">
    <original>F</original>
    <variation>L</variation>
    <location>
        <position position="332"/>
    </location>
</feature>
<feature type="sequence conflict" description="In Ref. 2; AAB51285 and 3; AAK15541." evidence="6" ref="2 3">
    <original>E</original>
    <variation>D</variation>
    <location>
        <position position="359"/>
    </location>
</feature>